<proteinExistence type="evidence at protein level"/>
<name>TRMB_STRPN</name>
<reference key="1">
    <citation type="journal article" date="2001" name="Science">
        <title>Complete genome sequence of a virulent isolate of Streptococcus pneumoniae.</title>
        <authorList>
            <person name="Tettelin H."/>
            <person name="Nelson K.E."/>
            <person name="Paulsen I.T."/>
            <person name="Eisen J.A."/>
            <person name="Read T.D."/>
            <person name="Peterson S.N."/>
            <person name="Heidelberg J.F."/>
            <person name="DeBoy R.T."/>
            <person name="Haft D.H."/>
            <person name="Dodson R.J."/>
            <person name="Durkin A.S."/>
            <person name="Gwinn M.L."/>
            <person name="Kolonay J.F."/>
            <person name="Nelson W.C."/>
            <person name="Peterson J.D."/>
            <person name="Umayam L.A."/>
            <person name="White O."/>
            <person name="Salzberg S.L."/>
            <person name="Lewis M.R."/>
            <person name="Radune D."/>
            <person name="Holtzapple E.K."/>
            <person name="Khouri H.M."/>
            <person name="Wolf A.M."/>
            <person name="Utterback T.R."/>
            <person name="Hansen C.L."/>
            <person name="McDonald L.A."/>
            <person name="Feldblyum T.V."/>
            <person name="Angiuoli S.V."/>
            <person name="Dickinson T."/>
            <person name="Hickey E.K."/>
            <person name="Holt I.E."/>
            <person name="Loftus B.J."/>
            <person name="Yang F."/>
            <person name="Smith H.O."/>
            <person name="Venter J.C."/>
            <person name="Dougherty B.A."/>
            <person name="Morrison D.A."/>
            <person name="Hollingshead S.K."/>
            <person name="Fraser C.M."/>
        </authorList>
    </citation>
    <scope>NUCLEOTIDE SEQUENCE [LARGE SCALE GENOMIC DNA]</scope>
    <source>
        <strain>ATCC BAA-334 / TIGR4</strain>
    </source>
</reference>
<reference key="2">
    <citation type="submission" date="2005-04" db="PDB data bank">
        <title>Crystal structure of the conserved methyltransferase from Streptococcus pneumoniae TIGR4.</title>
        <authorList>
            <consortium name="Midwest center for structural genomics (MCSG)"/>
        </authorList>
    </citation>
    <scope>X-RAY CRYSTALLOGRAPHY (2.02 ANGSTROMS)</scope>
</reference>
<gene>
    <name evidence="2" type="primary">trmB</name>
    <name type="ordered locus">SP_0550</name>
</gene>
<protein>
    <recommendedName>
        <fullName evidence="2">tRNA (guanine-N(7)-)-methyltransferase</fullName>
        <ecNumber evidence="2">2.1.1.33</ecNumber>
    </recommendedName>
    <alternativeName>
        <fullName evidence="2">tRNA (guanine(46)-N(7))-methyltransferase</fullName>
    </alternativeName>
    <alternativeName>
        <fullName evidence="2">tRNA(m7G46)-methyltransferase</fullName>
    </alternativeName>
</protein>
<evidence type="ECO:0000250" key="1">
    <source>
        <dbReference type="UniProtKB" id="Q12009"/>
    </source>
</evidence>
<evidence type="ECO:0000255" key="2">
    <source>
        <dbReference type="HAMAP-Rule" id="MF_01057"/>
    </source>
</evidence>
<evidence type="ECO:0007829" key="3">
    <source>
        <dbReference type="PDB" id="1YZH"/>
    </source>
</evidence>
<comment type="function">
    <text evidence="2">Catalyzes the formation of N(7)-methylguanine at position 46 (m7G46) in tRNA.</text>
</comment>
<comment type="catalytic activity">
    <reaction evidence="2">
        <text>guanosine(46) in tRNA + S-adenosyl-L-methionine = N(7)-methylguanosine(46) in tRNA + S-adenosyl-L-homocysteine</text>
        <dbReference type="Rhea" id="RHEA:42708"/>
        <dbReference type="Rhea" id="RHEA-COMP:10188"/>
        <dbReference type="Rhea" id="RHEA-COMP:10189"/>
        <dbReference type="ChEBI" id="CHEBI:57856"/>
        <dbReference type="ChEBI" id="CHEBI:59789"/>
        <dbReference type="ChEBI" id="CHEBI:74269"/>
        <dbReference type="ChEBI" id="CHEBI:74480"/>
        <dbReference type="EC" id="2.1.1.33"/>
    </reaction>
</comment>
<comment type="pathway">
    <text evidence="2">tRNA modification; N(7)-methylguanine-tRNA biosynthesis.</text>
</comment>
<comment type="similarity">
    <text evidence="2">Belongs to the class I-like SAM-binding methyltransferase superfamily. TrmB family.</text>
</comment>
<organism>
    <name type="scientific">Streptococcus pneumoniae serotype 4 (strain ATCC BAA-334 / TIGR4)</name>
    <dbReference type="NCBI Taxonomy" id="170187"/>
    <lineage>
        <taxon>Bacteria</taxon>
        <taxon>Bacillati</taxon>
        <taxon>Bacillota</taxon>
        <taxon>Bacilli</taxon>
        <taxon>Lactobacillales</taxon>
        <taxon>Streptococcaceae</taxon>
        <taxon>Streptococcus</taxon>
    </lineage>
</organism>
<feature type="chain" id="PRO_0000171403" description="tRNA (guanine-N(7)-)-methyltransferase">
    <location>
        <begin position="1"/>
        <end position="211"/>
    </location>
</feature>
<feature type="region of interest" description="Interaction with RNA" evidence="2">
    <location>
        <begin position="124"/>
        <end position="129"/>
    </location>
</feature>
<feature type="active site" evidence="1">
    <location>
        <position position="118"/>
    </location>
</feature>
<feature type="binding site" evidence="2">
    <location>
        <position position="44"/>
    </location>
    <ligand>
        <name>S-adenosyl-L-methionine</name>
        <dbReference type="ChEBI" id="CHEBI:59789"/>
    </ligand>
</feature>
<feature type="binding site" evidence="2">
    <location>
        <position position="69"/>
    </location>
    <ligand>
        <name>S-adenosyl-L-methionine</name>
        <dbReference type="ChEBI" id="CHEBI:59789"/>
    </ligand>
</feature>
<feature type="binding site" evidence="2">
    <location>
        <position position="96"/>
    </location>
    <ligand>
        <name>S-adenosyl-L-methionine</name>
        <dbReference type="ChEBI" id="CHEBI:59789"/>
    </ligand>
</feature>
<feature type="binding site" evidence="2">
    <location>
        <position position="118"/>
    </location>
    <ligand>
        <name>S-adenosyl-L-methionine</name>
        <dbReference type="ChEBI" id="CHEBI:59789"/>
    </ligand>
</feature>
<feature type="binding site" evidence="2">
    <location>
        <position position="122"/>
    </location>
    <ligand>
        <name>substrate</name>
    </ligand>
</feature>
<feature type="binding site" evidence="2">
    <location>
        <position position="154"/>
    </location>
    <ligand>
        <name>substrate</name>
    </ligand>
</feature>
<feature type="binding site" evidence="2">
    <location>
        <begin position="191"/>
        <end position="194"/>
    </location>
    <ligand>
        <name>substrate</name>
    </ligand>
</feature>
<feature type="helix" evidence="3">
    <location>
        <begin position="9"/>
        <end position="14"/>
    </location>
</feature>
<feature type="turn" evidence="3">
    <location>
        <begin position="17"/>
        <end position="19"/>
    </location>
</feature>
<feature type="helix" evidence="3">
    <location>
        <begin position="24"/>
        <end position="26"/>
    </location>
</feature>
<feature type="turn" evidence="3">
    <location>
        <begin position="27"/>
        <end position="30"/>
    </location>
</feature>
<feature type="helix" evidence="3">
    <location>
        <begin position="31"/>
        <end position="35"/>
    </location>
</feature>
<feature type="strand" evidence="3">
    <location>
        <begin position="41"/>
        <end position="46"/>
    </location>
</feature>
<feature type="helix" evidence="3">
    <location>
        <begin position="51"/>
        <end position="59"/>
    </location>
</feature>
<feature type="strand" evidence="3">
    <location>
        <begin position="63"/>
        <end position="70"/>
    </location>
</feature>
<feature type="helix" evidence="3">
    <location>
        <begin position="72"/>
        <end position="85"/>
    </location>
</feature>
<feature type="strand" evidence="3">
    <location>
        <begin position="88"/>
        <end position="94"/>
    </location>
</feature>
<feature type="helix" evidence="3">
    <location>
        <begin position="100"/>
        <end position="102"/>
    </location>
</feature>
<feature type="strand" evidence="3">
    <location>
        <begin position="110"/>
        <end position="116"/>
    </location>
</feature>
<feature type="helix" evidence="3">
    <location>
        <begin position="123"/>
        <end position="128"/>
    </location>
</feature>
<feature type="helix" evidence="3">
    <location>
        <begin position="133"/>
        <end position="142"/>
    </location>
</feature>
<feature type="strand" evidence="3">
    <location>
        <begin position="148"/>
        <end position="154"/>
    </location>
</feature>
<feature type="helix" evidence="3">
    <location>
        <begin position="156"/>
        <end position="169"/>
    </location>
</feature>
<feature type="strand" evidence="3">
    <location>
        <begin position="172"/>
        <end position="179"/>
    </location>
</feature>
<feature type="helix" evidence="3">
    <location>
        <begin position="180"/>
        <end position="182"/>
    </location>
</feature>
<feature type="helix" evidence="3">
    <location>
        <begin position="192"/>
        <end position="196"/>
    </location>
</feature>
<feature type="helix" evidence="3">
    <location>
        <begin position="198"/>
        <end position="200"/>
    </location>
</feature>
<feature type="strand" evidence="3">
    <location>
        <begin position="205"/>
        <end position="210"/>
    </location>
</feature>
<sequence length="211" mass="24379">MRVRNRKGATELLEANPQYVVLNPLEAKAKWRDLFGNDNPIHVEVGSGKGAFVSGMAKQNPDINYIGIDIQKSVLSYALDKVLEVGVPNIKLLWVDGSDLTDYFEDGEIDRLYLNFSDPWPKKRHEKRRLTYKTFLDTFKRILPENGEIHFKTDNRGLFEYSLVSFSQYGMKLNGVWLDLHASDFEGNVMTEYEQKFSNKGQVIYRVEAEF</sequence>
<accession>P67506</accession>
<accession>Q8DQV7</accession>
<accession>Q97S62</accession>
<keyword id="KW-0002">3D-structure</keyword>
<keyword id="KW-0489">Methyltransferase</keyword>
<keyword id="KW-1185">Reference proteome</keyword>
<keyword id="KW-0949">S-adenosyl-L-methionine</keyword>
<keyword id="KW-0808">Transferase</keyword>
<keyword id="KW-0819">tRNA processing</keyword>
<dbReference type="EC" id="2.1.1.33" evidence="2"/>
<dbReference type="EMBL" id="AE005672">
    <property type="protein sequence ID" value="AAK74707.1"/>
    <property type="molecule type" value="Genomic_DNA"/>
</dbReference>
<dbReference type="PIR" id="B95064">
    <property type="entry name" value="B95064"/>
</dbReference>
<dbReference type="RefSeq" id="WP_001266083.1">
    <property type="nucleotide sequence ID" value="NZ_CP155539.1"/>
</dbReference>
<dbReference type="PDB" id="1YZH">
    <property type="method" value="X-ray"/>
    <property type="resolution" value="2.02 A"/>
    <property type="chains" value="A/B=1-211"/>
</dbReference>
<dbReference type="PDBsum" id="1YZH"/>
<dbReference type="SMR" id="P67506"/>
<dbReference type="PaxDb" id="170187-SP_0550"/>
<dbReference type="EnsemblBacteria" id="AAK74707">
    <property type="protein sequence ID" value="AAK74707"/>
    <property type="gene ID" value="SP_0550"/>
</dbReference>
<dbReference type="GeneID" id="45654031"/>
<dbReference type="KEGG" id="spn:SP_0550"/>
<dbReference type="eggNOG" id="COG0220">
    <property type="taxonomic scope" value="Bacteria"/>
</dbReference>
<dbReference type="PhylomeDB" id="P67506"/>
<dbReference type="BioCyc" id="SPNE170187:G1FZB-571-MONOMER"/>
<dbReference type="UniPathway" id="UPA00989"/>
<dbReference type="EvolutionaryTrace" id="P67506"/>
<dbReference type="Proteomes" id="UP000000585">
    <property type="component" value="Chromosome"/>
</dbReference>
<dbReference type="GO" id="GO:0043527">
    <property type="term" value="C:tRNA methyltransferase complex"/>
    <property type="evidence" value="ECO:0007669"/>
    <property type="project" value="TreeGrafter"/>
</dbReference>
<dbReference type="GO" id="GO:0008176">
    <property type="term" value="F:tRNA (guanine(46)-N7)-methyltransferase activity"/>
    <property type="evidence" value="ECO:0007669"/>
    <property type="project" value="UniProtKB-UniRule"/>
</dbReference>
<dbReference type="CDD" id="cd02440">
    <property type="entry name" value="AdoMet_MTases"/>
    <property type="match status" value="1"/>
</dbReference>
<dbReference type="FunFam" id="3.40.50.150:FF:000035">
    <property type="entry name" value="tRNA (guanine-N(7)-)-methyltransferase"/>
    <property type="match status" value="1"/>
</dbReference>
<dbReference type="Gene3D" id="3.40.50.150">
    <property type="entry name" value="Vaccinia Virus protein VP39"/>
    <property type="match status" value="1"/>
</dbReference>
<dbReference type="HAMAP" id="MF_01057">
    <property type="entry name" value="tRNA_methyltr_TrmB"/>
    <property type="match status" value="1"/>
</dbReference>
<dbReference type="InterPro" id="IPR029063">
    <property type="entry name" value="SAM-dependent_MTases_sf"/>
</dbReference>
<dbReference type="InterPro" id="IPR003358">
    <property type="entry name" value="tRNA_(Gua-N-7)_MeTrfase_Trmb"/>
</dbReference>
<dbReference type="InterPro" id="IPR055361">
    <property type="entry name" value="tRNA_methyltr_TrmB_bact"/>
</dbReference>
<dbReference type="NCBIfam" id="NF001080">
    <property type="entry name" value="PRK00121.2-2"/>
    <property type="match status" value="1"/>
</dbReference>
<dbReference type="NCBIfam" id="TIGR00091">
    <property type="entry name" value="tRNA (guanosine(46)-N7)-methyltransferase TrmB"/>
    <property type="match status" value="1"/>
</dbReference>
<dbReference type="PANTHER" id="PTHR23417">
    <property type="entry name" value="3-DEOXY-D-MANNO-OCTULOSONIC-ACID TRANSFERASE/TRNA GUANINE-N 7 - -METHYLTRANSFERASE"/>
    <property type="match status" value="1"/>
</dbReference>
<dbReference type="PANTHER" id="PTHR23417:SF14">
    <property type="entry name" value="PENTACOTRIPEPTIDE-REPEAT REGION OF PRORP DOMAIN-CONTAINING PROTEIN"/>
    <property type="match status" value="1"/>
</dbReference>
<dbReference type="Pfam" id="PF02390">
    <property type="entry name" value="Methyltransf_4"/>
    <property type="match status" value="1"/>
</dbReference>
<dbReference type="SUPFAM" id="SSF53335">
    <property type="entry name" value="S-adenosyl-L-methionine-dependent methyltransferases"/>
    <property type="match status" value="1"/>
</dbReference>
<dbReference type="PROSITE" id="PS51625">
    <property type="entry name" value="SAM_MT_TRMB"/>
    <property type="match status" value="1"/>
</dbReference>